<feature type="signal peptide" evidence="1">
    <location>
        <begin position="1"/>
        <end position="23"/>
    </location>
</feature>
<feature type="chain" id="PRO_0000327560" description="Protein psiN">
    <location>
        <begin position="24"/>
        <end position="746"/>
    </location>
</feature>
<feature type="topological domain" description="Extracellular" evidence="1">
    <location>
        <begin position="24"/>
        <end position="679"/>
    </location>
</feature>
<feature type="transmembrane region" description="Helical" evidence="1">
    <location>
        <begin position="680"/>
        <end position="700"/>
    </location>
</feature>
<feature type="topological domain" description="Cytoplasmic" evidence="1">
    <location>
        <begin position="701"/>
        <end position="746"/>
    </location>
</feature>
<feature type="domain" description="PA14" evidence="2">
    <location>
        <begin position="125"/>
        <end position="276"/>
    </location>
</feature>
<feature type="region of interest" description="Disordered" evidence="3">
    <location>
        <begin position="714"/>
        <end position="746"/>
    </location>
</feature>
<feature type="compositionally biased region" description="Polar residues" evidence="3">
    <location>
        <begin position="717"/>
        <end position="746"/>
    </location>
</feature>
<feature type="glycosylation site" description="N-linked (GlcNAc...) asparagine" evidence="1">
    <location>
        <position position="97"/>
    </location>
</feature>
<feature type="glycosylation site" description="N-linked (GlcNAc...) asparagine" evidence="1">
    <location>
        <position position="124"/>
    </location>
</feature>
<feature type="glycosylation site" description="N-linked (GlcNAc...) asparagine" evidence="1">
    <location>
        <position position="319"/>
    </location>
</feature>
<feature type="glycosylation site" description="N-linked (GlcNAc...) asparagine" evidence="1">
    <location>
        <position position="353"/>
    </location>
</feature>
<feature type="glycosylation site" description="N-linked (GlcNAc...) asparagine" evidence="1">
    <location>
        <position position="380"/>
    </location>
</feature>
<feature type="glycosylation site" description="N-linked (GlcNAc...) asparagine" evidence="1">
    <location>
        <position position="477"/>
    </location>
</feature>
<feature type="glycosylation site" description="N-linked (GlcNAc...) asparagine" evidence="1">
    <location>
        <position position="553"/>
    </location>
</feature>
<feature type="glycosylation site" description="N-linked (GlcNAc...) asparagine" evidence="1">
    <location>
        <position position="628"/>
    </location>
</feature>
<feature type="glycosylation site" description="N-linked (GlcNAc...) asparagine" evidence="1">
    <location>
        <position position="654"/>
    </location>
</feature>
<reference key="1">
    <citation type="journal article" date="2005" name="Nature">
        <title>The genome of the social amoeba Dictyostelium discoideum.</title>
        <authorList>
            <person name="Eichinger L."/>
            <person name="Pachebat J.A."/>
            <person name="Gloeckner G."/>
            <person name="Rajandream M.A."/>
            <person name="Sucgang R."/>
            <person name="Berriman M."/>
            <person name="Song J."/>
            <person name="Olsen R."/>
            <person name="Szafranski K."/>
            <person name="Xu Q."/>
            <person name="Tunggal B."/>
            <person name="Kummerfeld S."/>
            <person name="Madera M."/>
            <person name="Konfortov B.A."/>
            <person name="Rivero F."/>
            <person name="Bankier A.T."/>
            <person name="Lehmann R."/>
            <person name="Hamlin N."/>
            <person name="Davies R."/>
            <person name="Gaudet P."/>
            <person name="Fey P."/>
            <person name="Pilcher K."/>
            <person name="Chen G."/>
            <person name="Saunders D."/>
            <person name="Sodergren E.J."/>
            <person name="Davis P."/>
            <person name="Kerhornou A."/>
            <person name="Nie X."/>
            <person name="Hall N."/>
            <person name="Anjard C."/>
            <person name="Hemphill L."/>
            <person name="Bason N."/>
            <person name="Farbrother P."/>
            <person name="Desany B."/>
            <person name="Just E."/>
            <person name="Morio T."/>
            <person name="Rost R."/>
            <person name="Churcher C.M."/>
            <person name="Cooper J."/>
            <person name="Haydock S."/>
            <person name="van Driessche N."/>
            <person name="Cronin A."/>
            <person name="Goodhead I."/>
            <person name="Muzny D.M."/>
            <person name="Mourier T."/>
            <person name="Pain A."/>
            <person name="Lu M."/>
            <person name="Harper D."/>
            <person name="Lindsay R."/>
            <person name="Hauser H."/>
            <person name="James K.D."/>
            <person name="Quiles M."/>
            <person name="Madan Babu M."/>
            <person name="Saito T."/>
            <person name="Buchrieser C."/>
            <person name="Wardroper A."/>
            <person name="Felder M."/>
            <person name="Thangavelu M."/>
            <person name="Johnson D."/>
            <person name="Knights A."/>
            <person name="Loulseged H."/>
            <person name="Mungall K.L."/>
            <person name="Oliver K."/>
            <person name="Price C."/>
            <person name="Quail M.A."/>
            <person name="Urushihara H."/>
            <person name="Hernandez J."/>
            <person name="Rabbinowitsch E."/>
            <person name="Steffen D."/>
            <person name="Sanders M."/>
            <person name="Ma J."/>
            <person name="Kohara Y."/>
            <person name="Sharp S."/>
            <person name="Simmonds M.N."/>
            <person name="Spiegler S."/>
            <person name="Tivey A."/>
            <person name="Sugano S."/>
            <person name="White B."/>
            <person name="Walker D."/>
            <person name="Woodward J.R."/>
            <person name="Winckler T."/>
            <person name="Tanaka Y."/>
            <person name="Shaulsky G."/>
            <person name="Schleicher M."/>
            <person name="Weinstock G.M."/>
            <person name="Rosenthal A."/>
            <person name="Cox E.C."/>
            <person name="Chisholm R.L."/>
            <person name="Gibbs R.A."/>
            <person name="Loomis W.F."/>
            <person name="Platzer M."/>
            <person name="Kay R.R."/>
            <person name="Williams J.G."/>
            <person name="Dear P.H."/>
            <person name="Noegel A.A."/>
            <person name="Barrell B.G."/>
            <person name="Kuspa A."/>
        </authorList>
    </citation>
    <scope>NUCLEOTIDE SEQUENCE [LARGE SCALE GENOMIC DNA]</scope>
    <source>
        <strain>AX4</strain>
    </source>
</reference>
<name>PSIN_DICDI</name>
<keyword id="KW-0325">Glycoprotein</keyword>
<keyword id="KW-0472">Membrane</keyword>
<keyword id="KW-1185">Reference proteome</keyword>
<keyword id="KW-0732">Signal</keyword>
<keyword id="KW-0812">Transmembrane</keyword>
<keyword id="KW-1133">Transmembrane helix</keyword>
<dbReference type="EMBL" id="AAFI02000197">
    <property type="protein sequence ID" value="EAL61005.1"/>
    <property type="molecule type" value="Genomic_DNA"/>
</dbReference>
<dbReference type="RefSeq" id="XP_629438.1">
    <property type="nucleotide sequence ID" value="XM_629436.1"/>
</dbReference>
<dbReference type="FunCoup" id="Q54CH8">
    <property type="interactions" value="12"/>
</dbReference>
<dbReference type="STRING" id="44689.Q54CH8"/>
<dbReference type="GlyCosmos" id="Q54CH8">
    <property type="glycosylation" value="9 sites, No reported glycans"/>
</dbReference>
<dbReference type="GlyGen" id="Q54CH8">
    <property type="glycosylation" value="9 sites"/>
</dbReference>
<dbReference type="PaxDb" id="44689-DDB0230026"/>
<dbReference type="EnsemblProtists" id="EAL61005">
    <property type="protein sequence ID" value="EAL61005"/>
    <property type="gene ID" value="DDB_G0292912"/>
</dbReference>
<dbReference type="GeneID" id="8628957"/>
<dbReference type="KEGG" id="ddi:DDB_G0292912"/>
<dbReference type="dictyBase" id="DDB_G0292912">
    <property type="gene designation" value="psiN"/>
</dbReference>
<dbReference type="VEuPathDB" id="AmoebaDB:DDB_G0292912"/>
<dbReference type="eggNOG" id="ENOG502STKH">
    <property type="taxonomic scope" value="Eukaryota"/>
</dbReference>
<dbReference type="HOGENOM" id="CLU_024170_0_0_1"/>
<dbReference type="InParanoid" id="Q54CH8"/>
<dbReference type="OMA" id="FCLELHA"/>
<dbReference type="PhylomeDB" id="Q54CH8"/>
<dbReference type="PRO" id="PR:Q54CH8"/>
<dbReference type="Proteomes" id="UP000002195">
    <property type="component" value="Chromosome 6"/>
</dbReference>
<dbReference type="GO" id="GO:0005576">
    <property type="term" value="C:extracellular region"/>
    <property type="evidence" value="ECO:0000318"/>
    <property type="project" value="GO_Central"/>
</dbReference>
<dbReference type="GO" id="GO:0016020">
    <property type="term" value="C:membrane"/>
    <property type="evidence" value="ECO:0007669"/>
    <property type="project" value="UniProtKB-SubCell"/>
</dbReference>
<dbReference type="InterPro" id="IPR011874">
    <property type="entry name" value="Fibro_Slime"/>
</dbReference>
<dbReference type="InterPro" id="IPR037524">
    <property type="entry name" value="PA14/GLEYA"/>
</dbReference>
<dbReference type="InterPro" id="IPR011658">
    <property type="entry name" value="PA14_dom"/>
</dbReference>
<dbReference type="InterPro" id="IPR051154">
    <property type="entry name" value="Prespore-cell_inducing_factor"/>
</dbReference>
<dbReference type="InterPro" id="IPR001673">
    <property type="entry name" value="S_mold_repeat"/>
</dbReference>
<dbReference type="NCBIfam" id="TIGR02148">
    <property type="entry name" value="Fibro_Slime"/>
    <property type="match status" value="1"/>
</dbReference>
<dbReference type="PANTHER" id="PTHR31137">
    <property type="entry name" value="PROTEIN PSIB-RELATED-RELATED"/>
    <property type="match status" value="1"/>
</dbReference>
<dbReference type="PANTHER" id="PTHR31137:SF3">
    <property type="entry name" value="PROTEIN PSIN"/>
    <property type="match status" value="1"/>
</dbReference>
<dbReference type="Pfam" id="PF00526">
    <property type="entry name" value="Dicty_CTDC"/>
    <property type="match status" value="5"/>
</dbReference>
<dbReference type="Pfam" id="PF07691">
    <property type="entry name" value="PA14"/>
    <property type="match status" value="1"/>
</dbReference>
<dbReference type="PROSITE" id="PS51820">
    <property type="entry name" value="PA14"/>
    <property type="match status" value="1"/>
</dbReference>
<organism>
    <name type="scientific">Dictyostelium discoideum</name>
    <name type="common">Social amoeba</name>
    <dbReference type="NCBI Taxonomy" id="44689"/>
    <lineage>
        <taxon>Eukaryota</taxon>
        <taxon>Amoebozoa</taxon>
        <taxon>Evosea</taxon>
        <taxon>Eumycetozoa</taxon>
        <taxon>Dictyostelia</taxon>
        <taxon>Dictyosteliales</taxon>
        <taxon>Dictyosteliaceae</taxon>
        <taxon>Dictyostelium</taxon>
    </lineage>
</organism>
<sequence length="746" mass="82839">MGNINKKLFYFLIQLITILIVLSDDSYNSLLPLEKDIAVIIRDLSPQTNPDFEIDNPNRVIKGLVKDQLNEEDRSPIYCCGDDHAPNIDRNRFVIHNQSTFYSWFHNQKDVNIVISKSLVFTRNVTSDDPRIYSYESDNFFPIDKMGFEADSYNGPIKKNQWKDRWGFPRNFHFCLELHASFFYIGGELFSFKGDDDVWVFIDNRLVLDLGAPHDVSGQNGQGSVYLDNLGLEKSKSYNFDFFYCERHTTDSHIMVETSIDFKCKYYDYCGVCEGMGKCCNPSECYGSLPACGHFECPGLTDIAPNVDWRYHCKVVVPNCSLSDTFCVKHQCDPDSKQCVPSTDYQPCQGKSNSSCIEARCDDKMGGCYLKSKPKDQSKNDTTCYRETCNEDTSTWEYKALCEDDSDKCISKKCIPNSGCSSSVVDCNDNNHCTIDSCSKDTGCIHDPIENCVPCVEGNKCSESSDKCQQLECNPYNSTTECIDRTKKNCDDSNACTIDTCNGESGECENTPKQCLAKNKCSTARCNSKTGQCDNIYHCDDGILCTLDKCSENGTCYYEANPCDDGDQCTIDICLNTLTETGGCSHSARVCEPKNSCFTSHCDKKLGCVQTPIECPVEAFCLISFCDNSTKKCMTADRPCIPDDPRCQYGVCDNDTKACIFKDYDPLPFKCQSAAVKAAVGVGAGAAAGIAIGGAIALGLAAFGGKRGYDAWKSSRDNQIQTSSENPLYNPNPNQGDNPLYAANNS</sequence>
<comment type="subcellular location">
    <subcellularLocation>
        <location evidence="4">Membrane</location>
        <topology evidence="4">Single-pass type I membrane protein</topology>
    </subcellularLocation>
</comment>
<comment type="similarity">
    <text evidence="4">Belongs to the prespore-cell-inducing factor family.</text>
</comment>
<evidence type="ECO:0000255" key="1"/>
<evidence type="ECO:0000255" key="2">
    <source>
        <dbReference type="PROSITE-ProRule" id="PRU01164"/>
    </source>
</evidence>
<evidence type="ECO:0000256" key="3">
    <source>
        <dbReference type="SAM" id="MobiDB-lite"/>
    </source>
</evidence>
<evidence type="ECO:0000305" key="4"/>
<proteinExistence type="inferred from homology"/>
<protein>
    <recommendedName>
        <fullName>Protein psiN</fullName>
    </recommendedName>
</protein>
<gene>
    <name type="primary">psiN</name>
    <name type="ORF">DDB_G0292912</name>
</gene>
<accession>Q54CH8</accession>